<reference key="1">
    <citation type="submission" date="2008-04" db="EMBL/GenBank/DDBJ databases">
        <title>Complete sequence of chromosome of Methylobacterium populi BJ001.</title>
        <authorList>
            <consortium name="US DOE Joint Genome Institute"/>
            <person name="Copeland A."/>
            <person name="Lucas S."/>
            <person name="Lapidus A."/>
            <person name="Glavina del Rio T."/>
            <person name="Dalin E."/>
            <person name="Tice H."/>
            <person name="Bruce D."/>
            <person name="Goodwin L."/>
            <person name="Pitluck S."/>
            <person name="Chertkov O."/>
            <person name="Brettin T."/>
            <person name="Detter J.C."/>
            <person name="Han C."/>
            <person name="Kuske C.R."/>
            <person name="Schmutz J."/>
            <person name="Larimer F."/>
            <person name="Land M."/>
            <person name="Hauser L."/>
            <person name="Kyrpides N."/>
            <person name="Mikhailova N."/>
            <person name="Marx C."/>
            <person name="Richardson P."/>
        </authorList>
    </citation>
    <scope>NUCLEOTIDE SEQUENCE [LARGE SCALE GENOMIC DNA]</scope>
    <source>
        <strain>ATCC BAA-705 / NCIMB 13946 / BJ001</strain>
    </source>
</reference>
<sequence>MANTVSAKKMTRKIAKRTAINRSRRSRMRTFVRKVEEAIATGDQGQALAALRVAEPEIMRAAQHGIVHKNNASRKVSRLAARVKAIAA</sequence>
<accession>B1ZE36</accession>
<feature type="chain" id="PRO_1000126476" description="Small ribosomal subunit protein bS20">
    <location>
        <begin position="1"/>
        <end position="88"/>
    </location>
</feature>
<gene>
    <name evidence="1" type="primary">rpsT</name>
    <name type="ordered locus">Mpop_0001</name>
</gene>
<name>RS20_METPB</name>
<dbReference type="EMBL" id="CP001029">
    <property type="protein sequence ID" value="ACB78197.1"/>
    <property type="molecule type" value="Genomic_DNA"/>
</dbReference>
<dbReference type="RefSeq" id="WP_012451962.1">
    <property type="nucleotide sequence ID" value="NC_010725.1"/>
</dbReference>
<dbReference type="SMR" id="B1ZE36"/>
<dbReference type="STRING" id="441620.Mpop_0001"/>
<dbReference type="KEGG" id="mpo:Mpop_0001"/>
<dbReference type="eggNOG" id="COG0268">
    <property type="taxonomic scope" value="Bacteria"/>
</dbReference>
<dbReference type="HOGENOM" id="CLU_160655_3_0_5"/>
<dbReference type="OrthoDB" id="9807974at2"/>
<dbReference type="Proteomes" id="UP000007136">
    <property type="component" value="Chromosome"/>
</dbReference>
<dbReference type="GO" id="GO:0005829">
    <property type="term" value="C:cytosol"/>
    <property type="evidence" value="ECO:0007669"/>
    <property type="project" value="TreeGrafter"/>
</dbReference>
<dbReference type="GO" id="GO:0015935">
    <property type="term" value="C:small ribosomal subunit"/>
    <property type="evidence" value="ECO:0007669"/>
    <property type="project" value="TreeGrafter"/>
</dbReference>
<dbReference type="GO" id="GO:0070181">
    <property type="term" value="F:small ribosomal subunit rRNA binding"/>
    <property type="evidence" value="ECO:0007669"/>
    <property type="project" value="TreeGrafter"/>
</dbReference>
<dbReference type="GO" id="GO:0003735">
    <property type="term" value="F:structural constituent of ribosome"/>
    <property type="evidence" value="ECO:0007669"/>
    <property type="project" value="InterPro"/>
</dbReference>
<dbReference type="GO" id="GO:0006412">
    <property type="term" value="P:translation"/>
    <property type="evidence" value="ECO:0007669"/>
    <property type="project" value="UniProtKB-UniRule"/>
</dbReference>
<dbReference type="FunFam" id="1.20.58.110:FF:000001">
    <property type="entry name" value="30S ribosomal protein S20"/>
    <property type="match status" value="1"/>
</dbReference>
<dbReference type="Gene3D" id="1.20.58.110">
    <property type="entry name" value="Ribosomal protein S20"/>
    <property type="match status" value="1"/>
</dbReference>
<dbReference type="HAMAP" id="MF_00500">
    <property type="entry name" value="Ribosomal_bS20"/>
    <property type="match status" value="1"/>
</dbReference>
<dbReference type="InterPro" id="IPR002583">
    <property type="entry name" value="Ribosomal_bS20"/>
</dbReference>
<dbReference type="InterPro" id="IPR036510">
    <property type="entry name" value="Ribosomal_bS20_sf"/>
</dbReference>
<dbReference type="NCBIfam" id="TIGR00029">
    <property type="entry name" value="S20"/>
    <property type="match status" value="1"/>
</dbReference>
<dbReference type="PANTHER" id="PTHR33398">
    <property type="entry name" value="30S RIBOSOMAL PROTEIN S20"/>
    <property type="match status" value="1"/>
</dbReference>
<dbReference type="PANTHER" id="PTHR33398:SF1">
    <property type="entry name" value="SMALL RIBOSOMAL SUBUNIT PROTEIN BS20C"/>
    <property type="match status" value="1"/>
</dbReference>
<dbReference type="Pfam" id="PF01649">
    <property type="entry name" value="Ribosomal_S20p"/>
    <property type="match status" value="1"/>
</dbReference>
<dbReference type="SUPFAM" id="SSF46992">
    <property type="entry name" value="Ribosomal protein S20"/>
    <property type="match status" value="1"/>
</dbReference>
<protein>
    <recommendedName>
        <fullName evidence="1">Small ribosomal subunit protein bS20</fullName>
    </recommendedName>
    <alternativeName>
        <fullName evidence="2">30S ribosomal protein S20</fullName>
    </alternativeName>
</protein>
<keyword id="KW-0687">Ribonucleoprotein</keyword>
<keyword id="KW-0689">Ribosomal protein</keyword>
<keyword id="KW-0694">RNA-binding</keyword>
<keyword id="KW-0699">rRNA-binding</keyword>
<organism>
    <name type="scientific">Methylorubrum populi (strain ATCC BAA-705 / NCIMB 13946 / BJ001)</name>
    <name type="common">Methylobacterium populi</name>
    <dbReference type="NCBI Taxonomy" id="441620"/>
    <lineage>
        <taxon>Bacteria</taxon>
        <taxon>Pseudomonadati</taxon>
        <taxon>Pseudomonadota</taxon>
        <taxon>Alphaproteobacteria</taxon>
        <taxon>Hyphomicrobiales</taxon>
        <taxon>Methylobacteriaceae</taxon>
        <taxon>Methylorubrum</taxon>
    </lineage>
</organism>
<evidence type="ECO:0000255" key="1">
    <source>
        <dbReference type="HAMAP-Rule" id="MF_00500"/>
    </source>
</evidence>
<evidence type="ECO:0000305" key="2"/>
<proteinExistence type="inferred from homology"/>
<comment type="function">
    <text evidence="1">Binds directly to 16S ribosomal RNA.</text>
</comment>
<comment type="similarity">
    <text evidence="1">Belongs to the bacterial ribosomal protein bS20 family.</text>
</comment>